<protein>
    <recommendedName>
        <fullName>Uncharacterized protein YfdY</fullName>
    </recommendedName>
</protein>
<gene>
    <name type="primary">yfdY</name>
    <name type="ordered locus">b2377</name>
    <name type="ordered locus">JW2374</name>
</gene>
<feature type="chain" id="PRO_0000169215" description="Uncharacterized protein YfdY">
    <location>
        <begin position="1"/>
        <end position="80"/>
    </location>
</feature>
<feature type="transmembrane region" description="Helical" evidence="1">
    <location>
        <begin position="2"/>
        <end position="22"/>
    </location>
</feature>
<feature type="transmembrane region" description="Helical" evidence="1">
    <location>
        <begin position="32"/>
        <end position="52"/>
    </location>
</feature>
<feature type="transmembrane region" description="Helical" evidence="1">
    <location>
        <begin position="55"/>
        <end position="75"/>
    </location>
</feature>
<accession>P76521</accession>
<accession>Q2MAJ9</accession>
<dbReference type="EMBL" id="U00096">
    <property type="protein sequence ID" value="AAC75436.1"/>
    <property type="molecule type" value="Genomic_DNA"/>
</dbReference>
<dbReference type="EMBL" id="AP009048">
    <property type="protein sequence ID" value="BAE76707.1"/>
    <property type="molecule type" value="Genomic_DNA"/>
</dbReference>
<dbReference type="PIR" id="F65011">
    <property type="entry name" value="F65011"/>
</dbReference>
<dbReference type="RefSeq" id="NP_416878.1">
    <property type="nucleotide sequence ID" value="NC_000913.3"/>
</dbReference>
<dbReference type="RefSeq" id="WP_000609275.1">
    <property type="nucleotide sequence ID" value="NZ_LN832404.1"/>
</dbReference>
<dbReference type="SMR" id="P76521"/>
<dbReference type="BioGRID" id="4260895">
    <property type="interactions" value="10"/>
</dbReference>
<dbReference type="FunCoup" id="P76521">
    <property type="interactions" value="72"/>
</dbReference>
<dbReference type="STRING" id="511145.b2377"/>
<dbReference type="PaxDb" id="511145-b2377"/>
<dbReference type="EnsemblBacteria" id="AAC75436">
    <property type="protein sequence ID" value="AAC75436"/>
    <property type="gene ID" value="b2377"/>
</dbReference>
<dbReference type="GeneID" id="948842"/>
<dbReference type="KEGG" id="ecj:JW2374"/>
<dbReference type="KEGG" id="eco:b2377"/>
<dbReference type="KEGG" id="ecoc:C3026_13220"/>
<dbReference type="PATRIC" id="fig|1411691.4.peg.4352"/>
<dbReference type="EchoBASE" id="EB3899"/>
<dbReference type="eggNOG" id="ENOG50330JG">
    <property type="taxonomic scope" value="Bacteria"/>
</dbReference>
<dbReference type="HOGENOM" id="CLU_176100_0_0_6"/>
<dbReference type="InParanoid" id="P76521"/>
<dbReference type="OMA" id="CYIGQVM"/>
<dbReference type="OrthoDB" id="6571886at2"/>
<dbReference type="PhylomeDB" id="P76521"/>
<dbReference type="BioCyc" id="EcoCyc:G7240-MONOMER"/>
<dbReference type="PRO" id="PR:P76521"/>
<dbReference type="Proteomes" id="UP000000625">
    <property type="component" value="Chromosome"/>
</dbReference>
<dbReference type="GO" id="GO:0005886">
    <property type="term" value="C:plasma membrane"/>
    <property type="evidence" value="ECO:0007669"/>
    <property type="project" value="UniProtKB-SubCell"/>
</dbReference>
<dbReference type="InterPro" id="IPR024470">
    <property type="entry name" value="DUF2545"/>
</dbReference>
<dbReference type="Pfam" id="PF10810">
    <property type="entry name" value="DUF2545"/>
    <property type="match status" value="1"/>
</dbReference>
<name>YFDY_ECOLI</name>
<organism>
    <name type="scientific">Escherichia coli (strain K12)</name>
    <dbReference type="NCBI Taxonomy" id="83333"/>
    <lineage>
        <taxon>Bacteria</taxon>
        <taxon>Pseudomonadati</taxon>
        <taxon>Pseudomonadota</taxon>
        <taxon>Gammaproteobacteria</taxon>
        <taxon>Enterobacterales</taxon>
        <taxon>Enterobacteriaceae</taxon>
        <taxon>Escherichia</taxon>
    </lineage>
</organism>
<comment type="subcellular location">
    <subcellularLocation>
        <location evidence="2">Cell membrane</location>
        <topology evidence="2">Multi-pass membrane protein</topology>
    </subcellularLocation>
</comment>
<sequence length="80" mass="8874">MINLWMFLALCIVCVSGYIGQVLNVVSAVSSFFGMVILAALIYYFTMWLTGGNELVTGIFMFLAPACGLMIRFMVGYGRR</sequence>
<evidence type="ECO:0000255" key="1"/>
<evidence type="ECO:0000305" key="2"/>
<keyword id="KW-1003">Cell membrane</keyword>
<keyword id="KW-0472">Membrane</keyword>
<keyword id="KW-1185">Reference proteome</keyword>
<keyword id="KW-0812">Transmembrane</keyword>
<keyword id="KW-1133">Transmembrane helix</keyword>
<proteinExistence type="predicted"/>
<reference key="1">
    <citation type="journal article" date="1997" name="Science">
        <title>The complete genome sequence of Escherichia coli K-12.</title>
        <authorList>
            <person name="Blattner F.R."/>
            <person name="Plunkett G. III"/>
            <person name="Bloch C.A."/>
            <person name="Perna N.T."/>
            <person name="Burland V."/>
            <person name="Riley M."/>
            <person name="Collado-Vides J."/>
            <person name="Glasner J.D."/>
            <person name="Rode C.K."/>
            <person name="Mayhew G.F."/>
            <person name="Gregor J."/>
            <person name="Davis N.W."/>
            <person name="Kirkpatrick H.A."/>
            <person name="Goeden M.A."/>
            <person name="Rose D.J."/>
            <person name="Mau B."/>
            <person name="Shao Y."/>
        </authorList>
    </citation>
    <scope>NUCLEOTIDE SEQUENCE [LARGE SCALE GENOMIC DNA]</scope>
    <source>
        <strain>K12 / MG1655 / ATCC 47076</strain>
    </source>
</reference>
<reference key="2">
    <citation type="journal article" date="2006" name="Mol. Syst. Biol.">
        <title>Highly accurate genome sequences of Escherichia coli K-12 strains MG1655 and W3110.</title>
        <authorList>
            <person name="Hayashi K."/>
            <person name="Morooka N."/>
            <person name="Yamamoto Y."/>
            <person name="Fujita K."/>
            <person name="Isono K."/>
            <person name="Choi S."/>
            <person name="Ohtsubo E."/>
            <person name="Baba T."/>
            <person name="Wanner B.L."/>
            <person name="Mori H."/>
            <person name="Horiuchi T."/>
        </authorList>
    </citation>
    <scope>NUCLEOTIDE SEQUENCE [LARGE SCALE GENOMIC DNA]</scope>
    <source>
        <strain>K12 / W3110 / ATCC 27325 / DSM 5911</strain>
    </source>
</reference>